<dbReference type="EC" id="3.6.4.-" evidence="3"/>
<dbReference type="EMBL" id="M87274">
    <property type="status" value="NOT_ANNOTATED_CDS"/>
    <property type="molecule type" value="Genomic_DNA"/>
</dbReference>
<dbReference type="EMBL" id="CM000364">
    <property type="protein sequence ID" value="EDX12813.1"/>
    <property type="molecule type" value="Genomic_DNA"/>
</dbReference>
<dbReference type="PIR" id="JC1246">
    <property type="entry name" value="JC1246"/>
</dbReference>
<dbReference type="SMR" id="P83968"/>
<dbReference type="STRING" id="7240.P83968"/>
<dbReference type="EnsemblMetazoa" id="FBtr0218935">
    <property type="protein sequence ID" value="FBpp0217427"/>
    <property type="gene ID" value="FBgn0012823"/>
</dbReference>
<dbReference type="EnsemblMetazoa" id="XM_016175375.3">
    <property type="protein sequence ID" value="XP_016034553.1"/>
    <property type="gene ID" value="LOC6727955"/>
</dbReference>
<dbReference type="GeneID" id="6727955"/>
<dbReference type="KEGG" id="dsi:Dsimw501_GD19025"/>
<dbReference type="HOGENOM" id="CLU_027965_0_2_1"/>
<dbReference type="OMA" id="WIWAGRD"/>
<dbReference type="OrthoDB" id="422673at2759"/>
<dbReference type="PhylomeDB" id="P83968"/>
<dbReference type="ChiTaRS" id="Act88F">
    <property type="organism name" value="fly"/>
</dbReference>
<dbReference type="Proteomes" id="UP000000304">
    <property type="component" value="Chromosome 3R"/>
</dbReference>
<dbReference type="Bgee" id="FBgn0012823">
    <property type="expression patterns" value="Expressed in adult organism and 2 other cell types or tissues"/>
</dbReference>
<dbReference type="GO" id="GO:0005856">
    <property type="term" value="C:cytoskeleton"/>
    <property type="evidence" value="ECO:0007669"/>
    <property type="project" value="UniProtKB-SubCell"/>
</dbReference>
<dbReference type="GO" id="GO:0030018">
    <property type="term" value="C:Z disc"/>
    <property type="evidence" value="ECO:0007669"/>
    <property type="project" value="EnsemblMetazoa"/>
</dbReference>
<dbReference type="GO" id="GO:0005524">
    <property type="term" value="F:ATP binding"/>
    <property type="evidence" value="ECO:0007669"/>
    <property type="project" value="UniProtKB-KW"/>
</dbReference>
<dbReference type="GO" id="GO:0016787">
    <property type="term" value="F:hydrolase activity"/>
    <property type="evidence" value="ECO:0007669"/>
    <property type="project" value="UniProtKB-KW"/>
</dbReference>
<dbReference type="GO" id="GO:0071689">
    <property type="term" value="P:muscle thin filament assembly"/>
    <property type="evidence" value="ECO:0007669"/>
    <property type="project" value="EnsemblMetazoa"/>
</dbReference>
<dbReference type="CDD" id="cd10224">
    <property type="entry name" value="ASKHA_NBD_actin"/>
    <property type="match status" value="1"/>
</dbReference>
<dbReference type="FunFam" id="2.30.36.70:FF:000001">
    <property type="entry name" value="Actin, alpha skeletal muscle"/>
    <property type="match status" value="1"/>
</dbReference>
<dbReference type="FunFam" id="3.30.420.40:FF:000131">
    <property type="entry name" value="Actin, alpha skeletal muscle"/>
    <property type="match status" value="1"/>
</dbReference>
<dbReference type="FunFam" id="3.30.420.40:FF:000291">
    <property type="entry name" value="Actin, alpha skeletal muscle"/>
    <property type="match status" value="1"/>
</dbReference>
<dbReference type="FunFam" id="3.90.640.10:FF:000047">
    <property type="entry name" value="Actin, alpha skeletal muscle"/>
    <property type="match status" value="1"/>
</dbReference>
<dbReference type="FunFam" id="3.30.420.40:FF:000058">
    <property type="entry name" value="Putative actin-related protein 5"/>
    <property type="match status" value="1"/>
</dbReference>
<dbReference type="Gene3D" id="3.30.420.40">
    <property type="match status" value="2"/>
</dbReference>
<dbReference type="Gene3D" id="3.90.640.10">
    <property type="entry name" value="Actin, Chain A, domain 4"/>
    <property type="match status" value="1"/>
</dbReference>
<dbReference type="InterPro" id="IPR004000">
    <property type="entry name" value="Actin"/>
</dbReference>
<dbReference type="InterPro" id="IPR020902">
    <property type="entry name" value="Actin/actin-like_CS"/>
</dbReference>
<dbReference type="InterPro" id="IPR004001">
    <property type="entry name" value="Actin_CS"/>
</dbReference>
<dbReference type="InterPro" id="IPR043129">
    <property type="entry name" value="ATPase_NBD"/>
</dbReference>
<dbReference type="PANTHER" id="PTHR11937">
    <property type="entry name" value="ACTIN"/>
    <property type="match status" value="1"/>
</dbReference>
<dbReference type="Pfam" id="PF00022">
    <property type="entry name" value="Actin"/>
    <property type="match status" value="1"/>
</dbReference>
<dbReference type="PRINTS" id="PR00190">
    <property type="entry name" value="ACTIN"/>
</dbReference>
<dbReference type="SMART" id="SM00268">
    <property type="entry name" value="ACTIN"/>
    <property type="match status" value="1"/>
</dbReference>
<dbReference type="SUPFAM" id="SSF53067">
    <property type="entry name" value="Actin-like ATPase domain"/>
    <property type="match status" value="2"/>
</dbReference>
<dbReference type="PROSITE" id="PS00406">
    <property type="entry name" value="ACTINS_1"/>
    <property type="match status" value="1"/>
</dbReference>
<dbReference type="PROSITE" id="PS00432">
    <property type="entry name" value="ACTINS_2"/>
    <property type="match status" value="1"/>
</dbReference>
<dbReference type="PROSITE" id="PS01132">
    <property type="entry name" value="ACTINS_ACT_LIKE"/>
    <property type="match status" value="1"/>
</dbReference>
<sequence length="376" mass="41700">MCDDDAGALVIDNGSGMCKAGFAGDDAPRAVFPSIVGRPRHQGVMVGMGQKDSYVGDEAQSKRGILTLKYPIEHGIITNWDDMEKIWHHTFYNELRVAPEEHPVLLTEAPLNPKANREKMTQIMFETFNSPAMYVAIQAVLSLYASGRTTGIVLDSGDGVSHTVPIYEGFALPHAILRLDLAGRDLTDYLMKILTERGYSFTTTAEREIVRDIKEKLCYVALDFEQEMATAAASTSLEKSYELPDGQVITIGNERFRCPEALFQPSFLGMESCGIHETVYNSIMKCDVDIRKDLYANSVLSGGTTMYPGIADRMQKEITALAPSTIKIKIIAPPERKYSVWIGGSILASLSTFQQMWISKQEYDESGPGIVHRKCF</sequence>
<name>ACT6_DROSI</name>
<evidence type="ECO:0000250" key="1"/>
<evidence type="ECO:0000250" key="2">
    <source>
        <dbReference type="UniProtKB" id="P02572"/>
    </source>
</evidence>
<evidence type="ECO:0000250" key="3">
    <source>
        <dbReference type="UniProtKB" id="P68137"/>
    </source>
</evidence>
<evidence type="ECO:0000305" key="4"/>
<feature type="propeptide" id="PRO_0000000670" description="Removed in mature form" evidence="1">
    <location>
        <begin position="1"/>
        <end position="2"/>
    </location>
</feature>
<feature type="chain" id="PRO_0000000671" description="Actin, indirect flight muscle">
    <location>
        <begin position="3"/>
        <end position="376"/>
    </location>
</feature>
<feature type="modified residue" description="N-acetylaspartate" evidence="1">
    <location>
        <position position="3"/>
    </location>
</feature>
<feature type="modified residue" description="Methionine sulfoxide" evidence="1">
    <location>
        <position position="45"/>
    </location>
</feature>
<feature type="modified residue" description="Methionine sulfoxide" evidence="1">
    <location>
        <position position="48"/>
    </location>
</feature>
<feature type="modified residue" description="Tele-methylhistidine" evidence="2">
    <location>
        <position position="74"/>
    </location>
</feature>
<comment type="function">
    <text>Actins are highly conserved proteins that are involved in various types of cell motility and are ubiquitously expressed in all eukaryotic cells.</text>
</comment>
<comment type="function">
    <text>Multiple isoforms are involved in various cellular functions such as cytoskeleton structure, cell mobility, chromosome movement and muscle contraction.</text>
</comment>
<comment type="catalytic activity">
    <reaction evidence="3">
        <text>ATP + H2O = ADP + phosphate + H(+)</text>
        <dbReference type="Rhea" id="RHEA:13065"/>
        <dbReference type="ChEBI" id="CHEBI:15377"/>
        <dbReference type="ChEBI" id="CHEBI:15378"/>
        <dbReference type="ChEBI" id="CHEBI:30616"/>
        <dbReference type="ChEBI" id="CHEBI:43474"/>
        <dbReference type="ChEBI" id="CHEBI:456216"/>
    </reaction>
</comment>
<comment type="subcellular location">
    <subcellularLocation>
        <location>Cytoplasm</location>
        <location>Cytoskeleton</location>
    </subcellularLocation>
</comment>
<comment type="PTM">
    <text evidence="1">Oxidation of Met-45 by Mical to form methionine sulfoxide promotes actin filament depolymerization. Methionine sulfoxide is produced stereospecifically, but it is not known whether the (S)-S-oxide or the (R)-S-oxide is produced (By similarity).</text>
</comment>
<comment type="miscellaneous">
    <text>In Drosophila there are 6 closely related actin genes.</text>
</comment>
<comment type="similarity">
    <text evidence="4">Belongs to the actin family.</text>
</comment>
<organism>
    <name type="scientific">Drosophila simulans</name>
    <name type="common">Fruit fly</name>
    <dbReference type="NCBI Taxonomy" id="7240"/>
    <lineage>
        <taxon>Eukaryota</taxon>
        <taxon>Metazoa</taxon>
        <taxon>Ecdysozoa</taxon>
        <taxon>Arthropoda</taxon>
        <taxon>Hexapoda</taxon>
        <taxon>Insecta</taxon>
        <taxon>Pterygota</taxon>
        <taxon>Neoptera</taxon>
        <taxon>Endopterygota</taxon>
        <taxon>Diptera</taxon>
        <taxon>Brachycera</taxon>
        <taxon>Muscomorpha</taxon>
        <taxon>Ephydroidea</taxon>
        <taxon>Drosophilidae</taxon>
        <taxon>Drosophila</taxon>
        <taxon>Sophophora</taxon>
    </lineage>
</organism>
<proteinExistence type="inferred from homology"/>
<reference key="1">
    <citation type="journal article" date="1992" name="Gene">
        <title>Sequence analysis of the indirect flight muscle actin-encoding gene of Drosophila simulans.</title>
        <authorList>
            <person name="Beifuss M.J."/>
            <person name="Durica D.S."/>
        </authorList>
    </citation>
    <scope>NUCLEOTIDE SEQUENCE [GENOMIC DNA]</scope>
</reference>
<reference key="2">
    <citation type="journal article" date="2007" name="Nature">
        <title>Evolution of genes and genomes on the Drosophila phylogeny.</title>
        <authorList>
            <consortium name="Drosophila 12 genomes consortium"/>
        </authorList>
    </citation>
    <scope>NUCLEOTIDE SEQUENCE [LARGE SCALE GENOMIC DNA]</scope>
</reference>
<keyword id="KW-0007">Acetylation</keyword>
<keyword id="KW-0067">ATP-binding</keyword>
<keyword id="KW-0963">Cytoplasm</keyword>
<keyword id="KW-0206">Cytoskeleton</keyword>
<keyword id="KW-0378">Hydrolase</keyword>
<keyword id="KW-0488">Methylation</keyword>
<keyword id="KW-0514">Muscle protein</keyword>
<keyword id="KW-0547">Nucleotide-binding</keyword>
<keyword id="KW-0558">Oxidation</keyword>
<keyword id="KW-1185">Reference proteome</keyword>
<accession>P83968</accession>
<accession>B4QYG8</accession>
<accession>P02575</accession>
<accession>P45893</accession>
<accession>Q9VF62</accession>
<protein>
    <recommendedName>
        <fullName>Actin, indirect flight muscle</fullName>
        <ecNumber evidence="3">3.6.4.-</ecNumber>
    </recommendedName>
    <alternativeName>
        <fullName>Actin-88F</fullName>
    </alternativeName>
</protein>
<gene>
    <name type="primary">Act88F</name>
    <name type="ORF">GD19025</name>
</gene>